<sequence length="126" mass="14420">MKISVGNDIVENSRIRDLLEKHGDRFLKRVFSESEREYCSNRKDPIPHLSGRFCVKEAFIKAIEPGDHVILDMREIELFGKEFGKKELVLHGKSKELFLTKGYSGCSVSISHAENYSTAVVVLYKE</sequence>
<keyword id="KW-0963">Cytoplasm</keyword>
<keyword id="KW-0275">Fatty acid biosynthesis</keyword>
<keyword id="KW-0276">Fatty acid metabolism</keyword>
<keyword id="KW-0444">Lipid biosynthesis</keyword>
<keyword id="KW-0443">Lipid metabolism</keyword>
<keyword id="KW-0460">Magnesium</keyword>
<keyword id="KW-0479">Metal-binding</keyword>
<keyword id="KW-0808">Transferase</keyword>
<accession>Q72U18</accession>
<protein>
    <recommendedName>
        <fullName evidence="1">Holo-[acyl-carrier-protein] synthase</fullName>
        <shortName evidence="1">Holo-ACP synthase</shortName>
        <ecNumber evidence="1">2.7.8.7</ecNumber>
    </recommendedName>
    <alternativeName>
        <fullName evidence="1">4'-phosphopantetheinyl transferase AcpS</fullName>
    </alternativeName>
</protein>
<feature type="chain" id="PRO_0000175661" description="Holo-[acyl-carrier-protein] synthase">
    <location>
        <begin position="1"/>
        <end position="126"/>
    </location>
</feature>
<feature type="binding site" evidence="1">
    <location>
        <position position="8"/>
    </location>
    <ligand>
        <name>Mg(2+)</name>
        <dbReference type="ChEBI" id="CHEBI:18420"/>
    </ligand>
</feature>
<feature type="binding site" evidence="1">
    <location>
        <position position="57"/>
    </location>
    <ligand>
        <name>Mg(2+)</name>
        <dbReference type="ChEBI" id="CHEBI:18420"/>
    </ligand>
</feature>
<organism>
    <name type="scientific">Leptospira interrogans serogroup Icterohaemorrhagiae serovar copenhageni (strain Fiocruz L1-130)</name>
    <dbReference type="NCBI Taxonomy" id="267671"/>
    <lineage>
        <taxon>Bacteria</taxon>
        <taxon>Pseudomonadati</taxon>
        <taxon>Spirochaetota</taxon>
        <taxon>Spirochaetia</taxon>
        <taxon>Leptospirales</taxon>
        <taxon>Leptospiraceae</taxon>
        <taxon>Leptospira</taxon>
    </lineage>
</organism>
<reference key="1">
    <citation type="journal article" date="2004" name="J. Bacteriol.">
        <title>Comparative genomics of two Leptospira interrogans serovars reveals novel insights into physiology and pathogenesis.</title>
        <authorList>
            <person name="Nascimento A.L.T.O."/>
            <person name="Ko A.I."/>
            <person name="Martins E.A.L."/>
            <person name="Monteiro-Vitorello C.B."/>
            <person name="Ho P.L."/>
            <person name="Haake D.A."/>
            <person name="Verjovski-Almeida S."/>
            <person name="Hartskeerl R.A."/>
            <person name="Marques M.V."/>
            <person name="Oliveira M.C."/>
            <person name="Menck C.F.M."/>
            <person name="Leite L.C.C."/>
            <person name="Carrer H."/>
            <person name="Coutinho L.L."/>
            <person name="Degrave W.M."/>
            <person name="Dellagostin O.A."/>
            <person name="El-Dorry H."/>
            <person name="Ferro E.S."/>
            <person name="Ferro M.I.T."/>
            <person name="Furlan L.R."/>
            <person name="Gamberini M."/>
            <person name="Giglioti E.A."/>
            <person name="Goes-Neto A."/>
            <person name="Goldman G.H."/>
            <person name="Goldman M.H.S."/>
            <person name="Harakava R."/>
            <person name="Jeronimo S.M.B."/>
            <person name="Junqueira-de-Azevedo I.L.M."/>
            <person name="Kimura E.T."/>
            <person name="Kuramae E.E."/>
            <person name="Lemos E.G.M."/>
            <person name="Lemos M.V.F."/>
            <person name="Marino C.L."/>
            <person name="Nunes L.R."/>
            <person name="de Oliveira R.C."/>
            <person name="Pereira G.G."/>
            <person name="Reis M.S."/>
            <person name="Schriefer A."/>
            <person name="Siqueira W.J."/>
            <person name="Sommer P."/>
            <person name="Tsai S.M."/>
            <person name="Simpson A.J.G."/>
            <person name="Ferro J.A."/>
            <person name="Camargo L.E.A."/>
            <person name="Kitajima J.P."/>
            <person name="Setubal J.C."/>
            <person name="Van Sluys M.A."/>
        </authorList>
    </citation>
    <scope>NUCLEOTIDE SEQUENCE [LARGE SCALE GENOMIC DNA]</scope>
    <source>
        <strain>Fiocruz L1-130</strain>
    </source>
</reference>
<comment type="function">
    <text evidence="1">Transfers the 4'-phosphopantetheine moiety from coenzyme A to a Ser of acyl-carrier-protein.</text>
</comment>
<comment type="catalytic activity">
    <reaction evidence="1">
        <text>apo-[ACP] + CoA = holo-[ACP] + adenosine 3',5'-bisphosphate + H(+)</text>
        <dbReference type="Rhea" id="RHEA:12068"/>
        <dbReference type="Rhea" id="RHEA-COMP:9685"/>
        <dbReference type="Rhea" id="RHEA-COMP:9690"/>
        <dbReference type="ChEBI" id="CHEBI:15378"/>
        <dbReference type="ChEBI" id="CHEBI:29999"/>
        <dbReference type="ChEBI" id="CHEBI:57287"/>
        <dbReference type="ChEBI" id="CHEBI:58343"/>
        <dbReference type="ChEBI" id="CHEBI:64479"/>
        <dbReference type="EC" id="2.7.8.7"/>
    </reaction>
</comment>
<comment type="cofactor">
    <cofactor evidence="1">
        <name>Mg(2+)</name>
        <dbReference type="ChEBI" id="CHEBI:18420"/>
    </cofactor>
</comment>
<comment type="subcellular location">
    <subcellularLocation>
        <location evidence="1">Cytoplasm</location>
    </subcellularLocation>
</comment>
<comment type="similarity">
    <text evidence="1">Belongs to the P-Pant transferase superfamily. AcpS family.</text>
</comment>
<proteinExistence type="inferred from homology"/>
<evidence type="ECO:0000255" key="1">
    <source>
        <dbReference type="HAMAP-Rule" id="MF_00101"/>
    </source>
</evidence>
<dbReference type="EC" id="2.7.8.7" evidence="1"/>
<dbReference type="EMBL" id="AE016823">
    <property type="protein sequence ID" value="AAS69460.1"/>
    <property type="molecule type" value="Genomic_DNA"/>
</dbReference>
<dbReference type="RefSeq" id="WP_000704154.1">
    <property type="nucleotide sequence ID" value="NC_005823.1"/>
</dbReference>
<dbReference type="SMR" id="Q72U18"/>
<dbReference type="GeneID" id="61144178"/>
<dbReference type="KEGG" id="lic:LIC_10846"/>
<dbReference type="HOGENOM" id="CLU_089696_0_2_12"/>
<dbReference type="Proteomes" id="UP000007037">
    <property type="component" value="Chromosome I"/>
</dbReference>
<dbReference type="GO" id="GO:0005737">
    <property type="term" value="C:cytoplasm"/>
    <property type="evidence" value="ECO:0007669"/>
    <property type="project" value="UniProtKB-SubCell"/>
</dbReference>
<dbReference type="GO" id="GO:0008897">
    <property type="term" value="F:holo-[acyl-carrier-protein] synthase activity"/>
    <property type="evidence" value="ECO:0007669"/>
    <property type="project" value="UniProtKB-UniRule"/>
</dbReference>
<dbReference type="GO" id="GO:0000287">
    <property type="term" value="F:magnesium ion binding"/>
    <property type="evidence" value="ECO:0007669"/>
    <property type="project" value="UniProtKB-UniRule"/>
</dbReference>
<dbReference type="GO" id="GO:0006633">
    <property type="term" value="P:fatty acid biosynthetic process"/>
    <property type="evidence" value="ECO:0007669"/>
    <property type="project" value="UniProtKB-UniRule"/>
</dbReference>
<dbReference type="Gene3D" id="3.90.470.20">
    <property type="entry name" value="4'-phosphopantetheinyl transferase domain"/>
    <property type="match status" value="1"/>
</dbReference>
<dbReference type="HAMAP" id="MF_00101">
    <property type="entry name" value="AcpS"/>
    <property type="match status" value="1"/>
</dbReference>
<dbReference type="InterPro" id="IPR008278">
    <property type="entry name" value="4-PPantetheinyl_Trfase_dom"/>
</dbReference>
<dbReference type="InterPro" id="IPR037143">
    <property type="entry name" value="4-PPantetheinyl_Trfase_dom_sf"/>
</dbReference>
<dbReference type="InterPro" id="IPR002582">
    <property type="entry name" value="ACPS"/>
</dbReference>
<dbReference type="InterPro" id="IPR004568">
    <property type="entry name" value="Ppantetheine-prot_Trfase_dom"/>
</dbReference>
<dbReference type="NCBIfam" id="TIGR00516">
    <property type="entry name" value="acpS"/>
    <property type="match status" value="1"/>
</dbReference>
<dbReference type="NCBIfam" id="TIGR00556">
    <property type="entry name" value="pantethn_trn"/>
    <property type="match status" value="1"/>
</dbReference>
<dbReference type="Pfam" id="PF01648">
    <property type="entry name" value="ACPS"/>
    <property type="match status" value="1"/>
</dbReference>
<dbReference type="SUPFAM" id="SSF56214">
    <property type="entry name" value="4'-phosphopantetheinyl transferase"/>
    <property type="match status" value="1"/>
</dbReference>
<gene>
    <name evidence="1" type="primary">acpS</name>
    <name type="ordered locus">LIC_10846</name>
</gene>
<name>ACPS_LEPIC</name>